<reference key="1">
    <citation type="journal article" date="1992" name="J. Bacteriol.">
        <title>Thermoregulation of the pap operon: evidence for the involvement of RimJ, the N-terminal acetylase of ribosomal protein S5.</title>
        <authorList>
            <person name="White-Ziegler C.A."/>
            <person name="Low D.A."/>
        </authorList>
    </citation>
    <scope>NUCLEOTIDE SEQUENCE [GENOMIC DNA]</scope>
    <source>
        <strain>K12 / MC4100 / ATCC 35695 / DSM 6574</strain>
    </source>
</reference>
<reference key="2">
    <citation type="journal article" date="1996" name="DNA Res.">
        <title>A 718-kb DNA sequence of the Escherichia coli K-12 genome corresponding to the 12.7-28.0 min region on the linkage map.</title>
        <authorList>
            <person name="Oshima T."/>
            <person name="Aiba H."/>
            <person name="Baba T."/>
            <person name="Fujita K."/>
            <person name="Hayashi K."/>
            <person name="Honjo A."/>
            <person name="Ikemoto K."/>
            <person name="Inada T."/>
            <person name="Itoh T."/>
            <person name="Kajihara M."/>
            <person name="Kanai K."/>
            <person name="Kashimoto K."/>
            <person name="Kimura S."/>
            <person name="Kitagawa M."/>
            <person name="Makino K."/>
            <person name="Masuda S."/>
            <person name="Miki T."/>
            <person name="Mizobuchi K."/>
            <person name="Mori H."/>
            <person name="Motomura K."/>
            <person name="Nakamura Y."/>
            <person name="Nashimoto H."/>
            <person name="Nishio Y."/>
            <person name="Saito N."/>
            <person name="Sampei G."/>
            <person name="Seki Y."/>
            <person name="Tagami H."/>
            <person name="Takemoto K."/>
            <person name="Wada C."/>
            <person name="Yamamoto Y."/>
            <person name="Yano M."/>
            <person name="Horiuchi T."/>
        </authorList>
    </citation>
    <scope>NUCLEOTIDE SEQUENCE [LARGE SCALE GENOMIC DNA]</scope>
    <source>
        <strain>K12 / W3110 / ATCC 27325 / DSM 5911</strain>
    </source>
</reference>
<reference key="3">
    <citation type="journal article" date="1997" name="Science">
        <title>The complete genome sequence of Escherichia coli K-12.</title>
        <authorList>
            <person name="Blattner F.R."/>
            <person name="Plunkett G. III"/>
            <person name="Bloch C.A."/>
            <person name="Perna N.T."/>
            <person name="Burland V."/>
            <person name="Riley M."/>
            <person name="Collado-Vides J."/>
            <person name="Glasner J.D."/>
            <person name="Rode C.K."/>
            <person name="Mayhew G.F."/>
            <person name="Gregor J."/>
            <person name="Davis N.W."/>
            <person name="Kirkpatrick H.A."/>
            <person name="Goeden M.A."/>
            <person name="Rose D.J."/>
            <person name="Mau B."/>
            <person name="Shao Y."/>
        </authorList>
    </citation>
    <scope>NUCLEOTIDE SEQUENCE [LARGE SCALE GENOMIC DNA]</scope>
    <source>
        <strain>K12 / MG1655 / ATCC 47076</strain>
    </source>
</reference>
<reference key="4">
    <citation type="journal article" date="2006" name="Mol. Syst. Biol.">
        <title>Highly accurate genome sequences of Escherichia coli K-12 strains MG1655 and W3110.</title>
        <authorList>
            <person name="Hayashi K."/>
            <person name="Morooka N."/>
            <person name="Yamamoto Y."/>
            <person name="Fujita K."/>
            <person name="Isono K."/>
            <person name="Choi S."/>
            <person name="Ohtsubo E."/>
            <person name="Baba T."/>
            <person name="Wanner B.L."/>
            <person name="Mori H."/>
            <person name="Horiuchi T."/>
        </authorList>
    </citation>
    <scope>NUCLEOTIDE SEQUENCE [LARGE SCALE GENOMIC DNA]</scope>
    <source>
        <strain>K12 / W3110 / ATCC 27325 / DSM 5911</strain>
    </source>
</reference>
<reference key="5">
    <citation type="journal article" date="1987" name="Mol. Gen. Genet.">
        <title>Cloning and nucleotide sequencing of the genes rimI and rimJ which encode enzymes acetylating ribosomal proteins S18 and S5 of Escherichia coli K12.</title>
        <authorList>
            <person name="Yoshikawa A."/>
            <person name="Isono S."/>
            <person name="Sheback A."/>
            <person name="Isono K."/>
        </authorList>
    </citation>
    <scope>NUCLEOTIDE SEQUENCE [GENOMIC DNA] OF 1-133</scope>
    <source>
        <strain>K12</strain>
    </source>
</reference>
<reference key="6">
    <citation type="journal article" date="2009" name="Mol. Cell. Proteomics">
        <title>Lysine acetylation is a highly abundant and evolutionarily conserved modification in Escherichia coli.</title>
        <authorList>
            <person name="Zhang J."/>
            <person name="Sprung R."/>
            <person name="Pei J."/>
            <person name="Tan X."/>
            <person name="Kim S."/>
            <person name="Zhu H."/>
            <person name="Liu C.F."/>
            <person name="Grishin N.V."/>
            <person name="Zhao Y."/>
        </authorList>
    </citation>
    <scope>ACETYLATION [LARGE SCALE ANALYSIS] AT LYS-80</scope>
    <scope>IDENTIFICATION BY MASS SPECTROMETRY</scope>
    <source>
        <strain>K12 / JW1106</strain>
        <strain>K12 / MG1655 / ATCC 47076</strain>
    </source>
</reference>
<name>YCEH_ECOLI</name>
<dbReference type="EMBL" id="M99278">
    <property type="protein sequence ID" value="AAA24550.1"/>
    <property type="status" value="ALT_FRAME"/>
    <property type="molecule type" value="Genomic_DNA"/>
</dbReference>
<dbReference type="EMBL" id="U00096">
    <property type="protein sequence ID" value="AAC74151.1"/>
    <property type="molecule type" value="Genomic_DNA"/>
</dbReference>
<dbReference type="EMBL" id="AP009048">
    <property type="protein sequence ID" value="BAA35875.1"/>
    <property type="molecule type" value="Genomic_DNA"/>
</dbReference>
<dbReference type="EMBL" id="X06118">
    <property type="status" value="NOT_ANNOTATED_CDS"/>
    <property type="molecule type" value="Genomic_DNA"/>
</dbReference>
<dbReference type="PIR" id="H64849">
    <property type="entry name" value="H64849"/>
</dbReference>
<dbReference type="RefSeq" id="NP_415585.1">
    <property type="nucleotide sequence ID" value="NC_000913.3"/>
</dbReference>
<dbReference type="RefSeq" id="WP_000877107.1">
    <property type="nucleotide sequence ID" value="NZ_SSZK01000053.1"/>
</dbReference>
<dbReference type="PDB" id="5VYV">
    <property type="method" value="X-ray"/>
    <property type="resolution" value="2.48 A"/>
    <property type="chains" value="A/B=1-215"/>
</dbReference>
<dbReference type="PDBsum" id="5VYV"/>
<dbReference type="SMR" id="P29217"/>
<dbReference type="BioGRID" id="4260078">
    <property type="interactions" value="19"/>
</dbReference>
<dbReference type="DIP" id="DIP-11527N"/>
<dbReference type="FunCoup" id="P29217">
    <property type="interactions" value="42"/>
</dbReference>
<dbReference type="IntAct" id="P29217">
    <property type="interactions" value="3"/>
</dbReference>
<dbReference type="STRING" id="511145.b1067"/>
<dbReference type="iPTMnet" id="P29217"/>
<dbReference type="jPOST" id="P29217"/>
<dbReference type="PaxDb" id="511145-b1067"/>
<dbReference type="EnsemblBacteria" id="AAC74151">
    <property type="protein sequence ID" value="AAC74151"/>
    <property type="gene ID" value="b1067"/>
</dbReference>
<dbReference type="GeneID" id="945633"/>
<dbReference type="KEGG" id="ecj:JW1054"/>
<dbReference type="KEGG" id="eco:b1067"/>
<dbReference type="KEGG" id="ecoc:C3026_06480"/>
<dbReference type="PATRIC" id="fig|511145.12.peg.1109"/>
<dbReference type="EchoBASE" id="EB1499"/>
<dbReference type="eggNOG" id="COG3132">
    <property type="taxonomic scope" value="Bacteria"/>
</dbReference>
<dbReference type="HOGENOM" id="CLU_057831_2_0_6"/>
<dbReference type="InParanoid" id="P29217"/>
<dbReference type="OMA" id="CNQKSSR"/>
<dbReference type="OrthoDB" id="9784785at2"/>
<dbReference type="PhylomeDB" id="P29217"/>
<dbReference type="BioCyc" id="EcoCyc:EG11537-MONOMER"/>
<dbReference type="PRO" id="PR:P29217"/>
<dbReference type="Proteomes" id="UP000000625">
    <property type="component" value="Chromosome"/>
</dbReference>
<dbReference type="GO" id="GO:0005829">
    <property type="term" value="C:cytosol"/>
    <property type="evidence" value="ECO:0000314"/>
    <property type="project" value="EcoCyc"/>
</dbReference>
<dbReference type="FunFam" id="1.10.10.10:FF:000196">
    <property type="entry name" value="UPF0502 protein YceH"/>
    <property type="match status" value="1"/>
</dbReference>
<dbReference type="FunFam" id="1.10.10.10:FF:000241">
    <property type="entry name" value="UPF0502 protein YceH"/>
    <property type="match status" value="1"/>
</dbReference>
<dbReference type="Gene3D" id="1.10.10.10">
    <property type="entry name" value="Winged helix-like DNA-binding domain superfamily/Winged helix DNA-binding domain"/>
    <property type="match status" value="2"/>
</dbReference>
<dbReference type="HAMAP" id="MF_01584">
    <property type="entry name" value="UPF0502"/>
    <property type="match status" value="1"/>
</dbReference>
<dbReference type="InterPro" id="IPR007432">
    <property type="entry name" value="DUF480"/>
</dbReference>
<dbReference type="InterPro" id="IPR036388">
    <property type="entry name" value="WH-like_DNA-bd_sf"/>
</dbReference>
<dbReference type="InterPro" id="IPR036390">
    <property type="entry name" value="WH_DNA-bd_sf"/>
</dbReference>
<dbReference type="NCBIfam" id="NF008413">
    <property type="entry name" value="PRK11239.1"/>
    <property type="match status" value="1"/>
</dbReference>
<dbReference type="PANTHER" id="PTHR38768">
    <property type="entry name" value="UPF0502 PROTEIN YCEH"/>
    <property type="match status" value="1"/>
</dbReference>
<dbReference type="PANTHER" id="PTHR38768:SF1">
    <property type="entry name" value="UPF0502 PROTEIN YCEH"/>
    <property type="match status" value="1"/>
</dbReference>
<dbReference type="Pfam" id="PF04337">
    <property type="entry name" value="DUF480"/>
    <property type="match status" value="1"/>
</dbReference>
<dbReference type="SUPFAM" id="SSF46785">
    <property type="entry name" value="Winged helix' DNA-binding domain"/>
    <property type="match status" value="2"/>
</dbReference>
<feature type="chain" id="PRO_0000168819" description="UPF0502 protein YceH">
    <location>
        <begin position="1"/>
        <end position="215"/>
    </location>
</feature>
<feature type="modified residue" description="N6-acetyllysine" evidence="1 2">
    <location>
        <position position="80"/>
    </location>
</feature>
<feature type="sequence conflict" description="In Ref. 5; X06118." evidence="3" ref="5">
    <original>V</original>
    <variation>E</variation>
    <location>
        <position position="133"/>
    </location>
</feature>
<feature type="sequence conflict" description="In Ref. 1; AAA24550." evidence="3" ref="1">
    <original>A</original>
    <variation>G</variation>
    <location>
        <position position="194"/>
    </location>
</feature>
<feature type="helix" evidence="4">
    <location>
        <begin position="7"/>
        <end position="22"/>
    </location>
</feature>
<feature type="helix" evidence="4">
    <location>
        <begin position="24"/>
        <end position="26"/>
    </location>
</feature>
<feature type="strand" evidence="4">
    <location>
        <begin position="28"/>
        <end position="30"/>
    </location>
</feature>
<feature type="helix" evidence="4">
    <location>
        <begin position="31"/>
        <end position="38"/>
    </location>
</feature>
<feature type="strand" evidence="4">
    <location>
        <begin position="41"/>
        <end position="43"/>
    </location>
</feature>
<feature type="helix" evidence="4">
    <location>
        <begin position="52"/>
        <end position="64"/>
    </location>
</feature>
<feature type="strand" evidence="4">
    <location>
        <begin position="67"/>
        <end position="71"/>
    </location>
</feature>
<feature type="strand" evidence="4">
    <location>
        <begin position="80"/>
        <end position="83"/>
    </location>
</feature>
<feature type="strand" evidence="4">
    <location>
        <begin position="85"/>
        <end position="87"/>
    </location>
</feature>
<feature type="helix" evidence="4">
    <location>
        <begin position="97"/>
        <end position="109"/>
    </location>
</feature>
<feature type="helix" evidence="4">
    <location>
        <begin position="114"/>
        <end position="120"/>
    </location>
</feature>
<feature type="turn" evidence="4">
    <location>
        <begin position="122"/>
        <end position="124"/>
    </location>
</feature>
<feature type="helix" evidence="4">
    <location>
        <begin position="130"/>
        <end position="142"/>
    </location>
</feature>
<feature type="strand" evidence="4">
    <location>
        <begin position="149"/>
        <end position="151"/>
    </location>
</feature>
<feature type="strand" evidence="4">
    <location>
        <begin position="163"/>
        <end position="166"/>
    </location>
</feature>
<evidence type="ECO:0000255" key="1">
    <source>
        <dbReference type="HAMAP-Rule" id="MF_01584"/>
    </source>
</evidence>
<evidence type="ECO:0000269" key="2">
    <source>
    </source>
</evidence>
<evidence type="ECO:0000305" key="3"/>
<evidence type="ECO:0007829" key="4">
    <source>
        <dbReference type="PDB" id="5VYV"/>
    </source>
</evidence>
<comment type="similarity">
    <text evidence="1">Belongs to the UPF0502 family.</text>
</comment>
<comment type="sequence caution" evidence="3">
    <conflict type="frameshift">
        <sequence resource="EMBL-CDS" id="AAA24550"/>
    </conflict>
</comment>
<comment type="sequence caution" evidence="3">
    <conflict type="frameshift">
        <sequence resource="EMBL" id="X06118"/>
    </conflict>
</comment>
<gene>
    <name evidence="1" type="primary">yceH</name>
    <name type="ordered locus">b1067</name>
    <name type="ordered locus">JW1054</name>
</gene>
<organism>
    <name type="scientific">Escherichia coli (strain K12)</name>
    <dbReference type="NCBI Taxonomy" id="83333"/>
    <lineage>
        <taxon>Bacteria</taxon>
        <taxon>Pseudomonadati</taxon>
        <taxon>Pseudomonadota</taxon>
        <taxon>Gammaproteobacteria</taxon>
        <taxon>Enterobacterales</taxon>
        <taxon>Enterobacteriaceae</taxon>
        <taxon>Escherichia</taxon>
    </lineage>
</organism>
<keyword id="KW-0002">3D-structure</keyword>
<keyword id="KW-0007">Acetylation</keyword>
<keyword id="KW-1185">Reference proteome</keyword>
<sequence length="215" mass="24177">MKYQLTALEARVIGCLLEKQVTTPEQYPLSVNGVVTACNQKTNREPVMNLSESEVQEQLDNLVKRHYLRTVSGFGNRVTKYEQRFCNSEFGDLKLSAAEVALITTLLLRGAQTPGELRSRAARMYEFSDMAEVESTLEQLANREDGPFVVRLAREPGKRENRYMHLFSGEVEDQPAVTDMSNAVDGDLQARVEALEIEVAELKQRLDSLLAHLGD</sequence>
<accession>P29217</accession>
<accession>P75930</accession>
<proteinExistence type="evidence at protein level"/>
<protein>
    <recommendedName>
        <fullName evidence="1">UPF0502 protein YceH</fullName>
    </recommendedName>
    <alternativeName>
        <fullName>G20.3</fullName>
    </alternativeName>
</protein>